<sequence>MDAVADIVFVSRDYQAQSLATDEISVSRGDLVELISSKASEKSRCFVRMFDSGDSPKEGWVPIDILEFNPTMSSSNGKESGDAEFRKLTILRELVETEEEFSRDLLHVVEKYIKGIDKPVVPRSVRDNKDIIFCNFLQIAEFHNNVLKEGLKCYSNQPNMVAKTFLRLERDFDKHVVYCQNEPLAQDYLGSSPDAKKYFQELSKQLGDDKSLAEHLKLPIQRINDYQLLFKDFIKYSLSLKENVKDLERALELMLSVPSRAYDNRFLSSIEGCRGNIYKLGRLLLHAWCNVVDKEGKAHDRYCFLFKSRILVTKVRKISENRSVFILQNIVKLPLCNIELKADEKQIHLSLKAPEANSFLPIDIKPHGPEAHLTWFNEISSHINQDVTLQEHNADDLKVDASQIASESELILHLPQRAEAHDPNLSVRPSDVAENYFLSKETKERLQHEQQELLKLEQEAIELYKKQQSSKSVSSKTESVEITSSQVKSSSEVRKVVSPPPPPQAQVKEVTPVKVVSSPPPPKEITPAKVATPPPQPQVVTSPVKEVAPPPQPRAVASPAKEVTPSQSEPVKAPSPIKEVRKEVPPSASHSKEVEALVATEIRESLTETRSTVVESGQSSEIREEIVVTEESSLEGKQVVALEREPSPCSIPKIQVYRPVECENPVVTKHKPIELKDIVGYSESLRDGDTAPAGGSPGRQQGYSANITDHASLTIWNNRLANIAGDRSGANQHLQQSGPPPPPIPPNFTRMPGFFQPLPLIAYETTIEILIVKARPPSPPPPPPPTIKRVLVHTESLEQKTQNFFEGIYDAASSDTSLRNAKQKIRSIKSTVLKSKDSTNYAQDTVQKAKARDFLHIFTPPVKKRPIYEIVEEPVNIFELEGDYTESIADDFREPSADFEARGQSVGGMDDYYSGYSRASTRRYETKTRDYDRGTSYDSTVERSQYGISSRRDRSSVDKVEARSSLLATGRTESRAASRAESRAESRASYSVAESRAGIRSSSRLQEDRPLRSVDKPVVVKMLKSVQVEPGETAHFEIQFKDQPGLVTWLKDNKPLEDRLADRITQTAAPMNSYRLDIKNCSETDAGTYTIRAQSASETTTVSAQLAVGQAPGHDETKTNTEPAFLVSLKDAEMIENTLFRFMVKIIGDPKPRVKFYKDEKEILETNDRIQIIRDKDYLGFYELVIADVQKTDAGTYSCKATNKHGEANCEAIATTVEDKNPFGALSGQILPAGEKPVFQWKRNGEEFDPEERFKVLFGEDEDSLALVFQHVKPEDAGIYTCVAQTSTGNISCSAELSVQGAIQTLNREPEKPTLVIEHREANASIGGSAILELQCKGFPKPAVQWKHDGEVIQVDDRHKFMYEDEESMSLVIKNVDTVDAGVYTIEAINELGQDESSINLVVKAPPKIKKITDITCSAGETIKMEIEVEGFPQPTVQVTNNGKDVTAESNVKISSSSIGKSLEKVVVEVKEIKLSQAGNYSIKATNDLSQTSEYWSCTVKSKPVIVKNFESEYIHGEKENVQMTVRIDAYPEAKLTWYHDETEIKITDSKYTVSSDGNAYTLKITGATRVDAGKYTVKATNEHGSATSSTQLLIKCAPEFTHKLKNITVAEGDSNVELVVGVDAYPRPHAKWYIDGIEIDEKRNDFRHVEEGNDFKLIMNQVATNMQGNYTCKIMNDYGKLEDNCVVTVNCKPKVKRGLKNVEVQEGKSFTLEVEVYSEPEAKIKWFKDGHEIYEDARIKISRDTQRIENYYLTLNLARTEDAGTYEMKATNFIGETTSTCKVAVLTSEALSLEQTVTKTLIATTEEPEEGAVPEIVHVDVFQQHSYESVPLKYEVIATGIPKPEAIWYHDGKPITPDKHTAITVDGDHYKLEVQSLDLVDAGEYKVVVQNKVGEKSHQGELSLSGIAEYRKPILTQGPGLKDIKVNKGDKVCEPVVFTADPAPEIVLLKDGQPVVETNNVKLKVDKKDAENGLVQYTCTLNILEAEIKDSGRYELKVKNKYGELVTSGWIDVLAKPEISGLNDTKCLPGDTICFEALVQANPKPKVSWTRGNENLCNHENCEVIADVDADKYRLVFQSVSPCEDGKYTITATNSEGRAAVDFNLAVLVEKPTFIVQPESQSIHDYRPVSTKVLVHGVPLPTIEWFKDDKPINYEAINKPGKDKLYAKEDTKKGTDQIESVLDIKSFRENDVGAYTCVATNEIGVTKAPFKLAMLSLAPSFVKKLDNALDVLQGEPLVLECCVDGSPLPTVQWLKDGDEVKPSESIKISTNPDGLVKLEINSCQPNDSGAYKLIISNPHGEKVALCAVAVKPEEMQPKFLKPITSQTVVVGEPLKLEAQVTGFPAPEVKWYKDGMLLRPSPEINFINSPNGQIGLIIDAAQPLDAGVYKCLIANKGGEIEGVSKVEIVPKESKPVFVAELQDASSIEGFPVKMDIKVVGNPKPKLQWFHNGHEIKPDASHIAIVENPDNSSSLIIEKTAPGDSGLYEVIAQNPEGSTASKAKLYVAPKADETATEEAPQFVSALRDVNADEGQELVLSAPFISNPMPEVIWSKDGVTLTPNERLLMTCDGKHIGLTIKPAEAADSGNYTCLLANPLGEDSSACNANVRKVYKPPVFTQKISDQQQVFGNNAKIPVTVSGVPYPDLEWYFQDKPIPKSEKYSIKNDGDHHMLIVNNCEKGDQGVYKCIASNREGKDITQGRLDIVNEIKKHSRSEPPVFLKKIGDCDIYEGMVAKFTACATGYPEPEVEWFKNDQKLFPSDRFLIDIEPNGLLRLTIKNVTEYDVGRYSCRIFNPYGDDICHAELFYDSLDSQQKPLEDQYTDFKKYKKSGAPPPLSEGPIISRMTDRGLLLSWNPSVPLTPRYPITYQIEMMDLPEGDWRTLRTGVRSCACDIRNLEPFRDYRFRVRVENKFGVSDPSPYTQTYRQKLVPDPPKTYTYLPPGTDFRPETSPYFPKDFDIERPPHDGLAQAPQFLLREQDISYGVKDHNTELMWFVYGYPKPKMTYYFDDMLIESGGRFDQSYTRNGQATLFINKMLDRDVGWYEAVATNEHGEARQRVRLEIAEHPRFLKRPDETFIMARKNGRIEAKLVGIPLPEVHWFKDWKPIVDSSRIKISSYDPDIYVLSIHDSIIKDGGLYSISARNIAGSISTSVTVHIEENEDQYIYKTYGRHPYVRSKQLRYQDKYDIGDELGRGTQGITYHAVERSSGDNYAAKIMYGRPELRPFMLNELEMMNTFNHKNLIRPYDAYDTDRSVTLIMELAAGGELVRDNLLRRDYYTERDIAHYIRQTLWGLEHMHEMGVGHMGLTIKDLLISVVGGDIIKVSDFGLSRKINRHNLSTLDYGMPEFVSPEVVNKEGVNFSHDMWTVGLITYVLLGGHNPFLGIDDRETLTKIREGRWDFKDEIWTHISDDGRDFISRLLLYSPEERMDVKTALKHPWFFMLDRPVYDHDYQIGTDRLRNYYDHFRDWYANASCKNYFRRRRLSGCFQHPSKMVYPPGHVYTPENTPEPLPEPRIRAKREEVVSKYLHPDYELGLIQSESHYQYGPDTYLLQLRDVNFPVRLREYMKVAHRRSPSFALNDSVDWSLPVIRERRRFTDIMDEEIDDERTRSRISMYAANESYSIRRLRTELGPRLDEYTEADAMIETQREGYPPFFREKPQTIAITENQPSHIHCFAVGDPKPCVQWFKNDMVLTESKRIKISVDEDGRSILRFEPALHFDVGVYKVVARNKVGQTVARCRIVVATLPDAPDSPEISANSGTEILLRWKQPRDDGHSTVLCYSLQYKLSNCDAWTTVADNIDHEFYLLHDLQPNTNYQFRLASKNRIGWSEMGIPVSASTVGGDAPKIHITKAMKHLQQLTENGHQVVPEEERVHTDYHCEREPPNWVTDSSVSDKYSFISEIARGEFSTIVKGIQKSTDTVVVAKILEVTDENEDNVVAEFDNFKTLRHERIPALFSAYKPLNVPIAIFVMEKLQGADVLTYFSSRHEYSEQMVATVVTQLLDALQYLHWRGYCHLNIQPDNVVMASVRSIQVKLVDFGSAKKVNKLGMKVTPCGSLDFQPPEMINDEPIFPQSDIWSLGALTYLLLSGCSPFRGADEYETKQNISFVRYRFENLFKEVTPEATRFIMLLFKRHPTKRPYTEDCLEHRWLMSSDYMVRKRERAIFLGSRLKTFCDEYHDLKNASATSSKVLNTVAGGPTPTQLLRSNSIQEELLTTF</sequence>
<gene>
    <name evidence="16" type="primary">Obsc</name>
    <name evidence="13" type="synonym">Unc-89</name>
    <name evidence="16" type="ORF">CG33519</name>
</gene>
<proteinExistence type="evidence at protein level"/>
<accession>A8DYP0</accession>
<accession>A0A0B4LGC9</accession>
<accession>A0A0B4LGE3</accession>
<accession>A0A0B4LGI5</accession>
<accession>A0A0B4LHF2</accession>
<accession>Q1ZYJ8</accession>
<accession>Q59E65</accession>
<comment type="function">
    <text evidence="10 11 12">Structural component of the muscle M line which is involved in assembly and organization of sarcomere (PubMed:22467859, PubMed:26251439). Required for the development and organization of indirect flight muscle sarcomeres by regulating the formation of M line and H zone and the correct assembly of thick and thin filaments in the sarcomere (PubMed:22467859, PubMed:26251439). Lacks serine/threonine-protein kinase activity (PubMed:37121260).</text>
</comment>
<comment type="subunit">
    <text evidence="10 11">Interacts with myosin (PubMed:22467859). May interact (via protein kinase domain 1) with ball (PubMed:26251439). May interact (via protein kinase domain 1 or 2) with mask (PubMed:26251439). May interact (via protein kinase domain 2) with Tm1/tropomyosin-1 (PubMed:26251439).</text>
</comment>
<comment type="subcellular location">
    <subcellularLocation>
        <location evidence="10 11">Cytoplasm</location>
        <location evidence="10 11">Myofibril</location>
        <location evidence="10 11">Sarcomere</location>
        <location evidence="10 11">M line</location>
    </subcellularLocation>
    <text evidence="10">In the embryo, localizes across the muscles in a striped pattern and is positioned laterally to the sites at which muscles are attached to the epidermis. In the larval body wall muscles, localizes to the M line and moves away from the attachment sites. During pupal development, progressively forms broad striations at the M line which become more defined after pupal eclosion. Colocalizes with myosin thick filaments at the M line.</text>
</comment>
<comment type="alternative products">
    <event type="alternative splicing"/>
    <isoform>
        <id>A8DYP0-1</id>
        <name evidence="16">C</name>
        <sequence type="displayed"/>
    </isoform>
    <isoform>
        <id>A8DYP0-2</id>
        <name evidence="16">D</name>
        <sequence type="described" ref="VSP_058765 VSP_058767"/>
    </isoform>
    <isoform>
        <id>A8DYP0-3</id>
        <name evidence="16">E</name>
        <sequence type="described" ref="VSP_058767"/>
    </isoform>
    <isoform>
        <id>A8DYP0-4</id>
        <name evidence="16">F</name>
        <sequence type="described" ref="VSP_058764"/>
    </isoform>
    <isoform>
        <id>A8DYP0-5</id>
        <name evidence="16">H</name>
        <sequence type="described" ref="VSP_058763"/>
    </isoform>
    <isoform>
        <id>A8DYP0-6</id>
        <name evidence="16">G</name>
        <sequence type="described" ref="VSP_058766 VSP_058767"/>
    </isoform>
    <text evidence="10">A number of isoforms are produced.</text>
</comment>
<comment type="tissue specificity">
    <text evidence="10 11">Expressed in the thoracic muscles including the indirect flight muscles (IFM) (at protein level).</text>
</comment>
<comment type="developmental stage">
    <text evidence="10">Expression starts in embryos at stage 16 and is found in the M line of somatic muscle during late larval stage 17, pupa and in pharate adult. The various isoforms are expressed differentially during development.</text>
</comment>
<comment type="induction">
    <text evidence="9">Expression decreases with age.</text>
</comment>
<comment type="domain">
    <text evidence="12">The protein kinase domain 1 binds ATP with high affinity in a Mg(2+)-independent manner (PubMed:37121260). However, lacks canonical protein kinase activity, probably due to the presence of a glycine residue instead of an aspartate residue at position 3306 in the catalytic site pocket (PubMed:37121260).</text>
</comment>
<comment type="domain">
    <text evidence="5">The protein kinase domain 2 is predicted to be catalytically inactive.</text>
</comment>
<comment type="disruption phenotype">
    <text evidence="10 11">RNAi-mediated knockdown either in the indirect flight muscles (IFM) or in all muscles prevents flies from flying without affecting jumping and slightly reduces larval crawling (PubMed:22467859). Causes severe defects in IFM sarcomere development and organization resulting in narrower myofibrils (PubMed:22467859). During sarcomere development at the pupal stage, myosin is mislocalized and no regular sarcomeres are formed (PubMed:22467859). In the adult, abnormal localization of myosin in the mid-region of the sarcomere, H zone shifts from the middle of the sarcomere and M lines are less defined (PubMed:22467859). Thick filaments are asymmetric with the bare zone often shifted towards the end of the filament (PubMed:22467859). Thick filament length is mostly normal although some are longer and by-pass the Z line (PubMed:22467859). Thin filaments are abnormally shorter or longer and sometimes extend into the H zone (PubMed:22467859). Several Z and M lines associated proteins are mislocalized (PubMed:22467859, PubMed:26251439). zormin is more diffused in both Z and M lines and tropomodulin is confined to the core of the myofibril in the H zone (PubMed:22467859). ball is still partially localized to the Z line but appears more diffuse across the sarcomere compare to wild type (PubMed:26251439). mask localization to Z lines is not affected but is absent or in a punctate form in the M line (PubMed:26251439). kettin localization to the Z line is not affected (PubMed:22467859).</text>
</comment>
<comment type="similarity">
    <text evidence="14">Belongs to the protein kinase superfamily. CAMK Ser/Thr protein kinase family.</text>
</comment>
<comment type="caution">
    <text evidence="12">In contrast to obscurins in other species, lacks serine/threonine kinase activity as protein kinase domain 1 is catalytically inactive and protein kinase domain 2 is predicted to be inactive (PubMed:37121260). The lack of activity of protein kinase domain 1 is probably due to the presence of a glycine residue instead of an aspartate residue at position 3306 in the catalytic site pocket (PubMed:37121260).</text>
</comment>
<name>OBSCN_DROME</name>
<organism evidence="17">
    <name type="scientific">Drosophila melanogaster</name>
    <name type="common">Fruit fly</name>
    <dbReference type="NCBI Taxonomy" id="7227"/>
    <lineage>
        <taxon>Eukaryota</taxon>
        <taxon>Metazoa</taxon>
        <taxon>Ecdysozoa</taxon>
        <taxon>Arthropoda</taxon>
        <taxon>Hexapoda</taxon>
        <taxon>Insecta</taxon>
        <taxon>Pterygota</taxon>
        <taxon>Neoptera</taxon>
        <taxon>Endopterygota</taxon>
        <taxon>Diptera</taxon>
        <taxon>Brachycera</taxon>
        <taxon>Muscomorpha</taxon>
        <taxon>Ephydroidea</taxon>
        <taxon>Drosophilidae</taxon>
        <taxon>Drosophila</taxon>
        <taxon>Sophophora</taxon>
    </lineage>
</organism>
<feature type="chain" id="PRO_0000438925" description="Protein Obscurin" evidence="14">
    <location>
        <begin position="1"/>
        <end position="4218"/>
    </location>
</feature>
<feature type="domain" description="SH3" evidence="6">
    <location>
        <begin position="3"/>
        <end position="71"/>
    </location>
</feature>
<feature type="domain" description="DH" evidence="3">
    <location>
        <begin position="86"/>
        <end position="264"/>
    </location>
</feature>
<feature type="domain" description="Ig-like C2-type 1" evidence="4">
    <location>
        <begin position="1017"/>
        <end position="1103"/>
    </location>
</feature>
<feature type="domain" description="Ig-like C2-type 2" evidence="4">
    <location>
        <begin position="1152"/>
        <end position="1298"/>
    </location>
</feature>
<feature type="domain" description="Ig-like C2-type 3" evidence="4">
    <location>
        <begin position="1313"/>
        <end position="1400"/>
    </location>
</feature>
<feature type="domain" description="Ig-like C2-type 4" evidence="4">
    <location>
        <begin position="1504"/>
        <end position="1594"/>
    </location>
</feature>
<feature type="domain" description="Ig-like C2-type 5" evidence="4">
    <location>
        <begin position="1599"/>
        <end position="1689"/>
    </location>
</feature>
<feature type="domain" description="Ig-like C2-type 6" evidence="4">
    <location>
        <begin position="1694"/>
        <end position="1785"/>
    </location>
</feature>
<feature type="domain" description="Ig-like C2-type 7" evidence="4">
    <location>
        <begin position="1815"/>
        <end position="1906"/>
    </location>
</feature>
<feature type="domain" description="Ig-like C2-type 8" evidence="4">
    <location>
        <begin position="2018"/>
        <end position="2107"/>
    </location>
</feature>
<feature type="domain" description="Ig-like C2-type 9" evidence="4">
    <location>
        <begin position="2113"/>
        <end position="2214"/>
    </location>
</feature>
<feature type="domain" description="Ig-like C2-type 10" evidence="4">
    <location>
        <begin position="2220"/>
        <end position="2305"/>
    </location>
</feature>
<feature type="domain" description="Ig-like C2-type 11" evidence="4">
    <location>
        <begin position="2318"/>
        <end position="2409"/>
    </location>
</feature>
<feature type="domain" description="Ig-like C2-type 12" evidence="4">
    <location>
        <begin position="2415"/>
        <end position="2505"/>
    </location>
</feature>
<feature type="domain" description="Ig-like C2-type 13" evidence="4">
    <location>
        <begin position="2519"/>
        <end position="2609"/>
    </location>
</feature>
<feature type="domain" description="Ig-like C2-type 14" evidence="4">
    <location>
        <begin position="2614"/>
        <end position="2698"/>
    </location>
</feature>
<feature type="domain" description="Ig-like C2-type 15" evidence="4">
    <location>
        <begin position="2716"/>
        <end position="2792"/>
    </location>
</feature>
<feature type="domain" description="Fibronectin type-III 1" evidence="7">
    <location>
        <begin position="2832"/>
        <end position="2933"/>
    </location>
</feature>
<feature type="domain" description="Protein kinase 1" evidence="5">
    <location>
        <begin position="3186"/>
        <end position="3440"/>
    </location>
</feature>
<feature type="domain" description="Ig-like C2-type 16" evidence="4">
    <location>
        <begin position="3654"/>
        <end position="3738"/>
    </location>
</feature>
<feature type="domain" description="Fibronectin type-III 2" evidence="7">
    <location>
        <begin position="3750"/>
        <end position="3843"/>
    </location>
</feature>
<feature type="domain" description="Protein kinase 2" evidence="5">
    <location>
        <begin position="3897"/>
        <end position="4151"/>
    </location>
</feature>
<feature type="region of interest" description="Disordered" evidence="8">
    <location>
        <begin position="465"/>
        <end position="592"/>
    </location>
</feature>
<feature type="region of interest" description="Disordered" evidence="8">
    <location>
        <begin position="684"/>
        <end position="703"/>
    </location>
</feature>
<feature type="region of interest" description="Disordered" evidence="8">
    <location>
        <begin position="728"/>
        <end position="750"/>
    </location>
</feature>
<feature type="region of interest" description="Disordered" evidence="8">
    <location>
        <begin position="923"/>
        <end position="1010"/>
    </location>
</feature>
<feature type="coiled-coil region" evidence="2">
    <location>
        <begin position="439"/>
        <end position="466"/>
    </location>
</feature>
<feature type="compositionally biased region" description="Low complexity" evidence="8">
    <location>
        <begin position="466"/>
        <end position="490"/>
    </location>
</feature>
<feature type="compositionally biased region" description="Low complexity" evidence="8">
    <location>
        <begin position="505"/>
        <end position="517"/>
    </location>
</feature>
<feature type="compositionally biased region" description="Basic and acidic residues" evidence="8">
    <location>
        <begin position="578"/>
        <end position="592"/>
    </location>
</feature>
<feature type="compositionally biased region" description="Basic and acidic residues" evidence="8">
    <location>
        <begin position="923"/>
        <end position="935"/>
    </location>
</feature>
<feature type="compositionally biased region" description="Polar residues" evidence="8">
    <location>
        <begin position="936"/>
        <end position="948"/>
    </location>
</feature>
<feature type="compositionally biased region" description="Basic and acidic residues" evidence="8">
    <location>
        <begin position="950"/>
        <end position="962"/>
    </location>
</feature>
<feature type="compositionally biased region" description="Basic and acidic residues" evidence="8">
    <location>
        <begin position="972"/>
        <end position="986"/>
    </location>
</feature>
<feature type="compositionally biased region" description="Low complexity" evidence="8">
    <location>
        <begin position="987"/>
        <end position="996"/>
    </location>
</feature>
<feature type="binding site" evidence="12 19">
    <location>
        <position position="3198"/>
    </location>
    <ligand>
        <name>ATP</name>
        <dbReference type="ChEBI" id="CHEBI:30616"/>
    </ligand>
</feature>
<feature type="binding site" evidence="12 19">
    <location>
        <position position="3215"/>
    </location>
    <ligand>
        <name>ATP</name>
        <dbReference type="ChEBI" id="CHEBI:30616"/>
    </ligand>
</feature>
<feature type="binding site" evidence="12 19">
    <location>
        <position position="3260"/>
    </location>
    <ligand>
        <name>ATP</name>
        <dbReference type="ChEBI" id="CHEBI:30616"/>
    </ligand>
</feature>
<feature type="binding site" evidence="12 19">
    <location>
        <position position="3262"/>
    </location>
    <ligand>
        <name>ATP</name>
        <dbReference type="ChEBI" id="CHEBI:30616"/>
    </ligand>
</feature>
<feature type="binding site" evidence="12 19">
    <location>
        <position position="3266"/>
    </location>
    <ligand>
        <name>ATP</name>
        <dbReference type="ChEBI" id="CHEBI:30616"/>
    </ligand>
</feature>
<feature type="binding site" evidence="12 19">
    <location>
        <position position="3310"/>
    </location>
    <ligand>
        <name>ATP</name>
        <dbReference type="ChEBI" id="CHEBI:30616"/>
    </ligand>
</feature>
<feature type="binding site" evidence="12 19">
    <location>
        <position position="3326"/>
    </location>
    <ligand>
        <name>ATP</name>
        <dbReference type="ChEBI" id="CHEBI:30616"/>
    </ligand>
</feature>
<feature type="disulfide bond" evidence="4">
    <location>
        <begin position="1199"/>
        <end position="1282"/>
    </location>
</feature>
<feature type="disulfide bond" evidence="4">
    <location>
        <begin position="2739"/>
        <end position="2790"/>
    </location>
</feature>
<feature type="splice variant" id="VSP_058763" description="In isoform H." evidence="14">
    <location>
        <begin position="1"/>
        <end position="908"/>
    </location>
</feature>
<feature type="splice variant" id="VSP_058764" description="In isoform F." evidence="14">
    <location>
        <begin position="1"/>
        <end position="253"/>
    </location>
</feature>
<feature type="splice variant" id="VSP_058765" description="In isoform D." evidence="14">
    <original>MDA</original>
    <variation>MDAQ</variation>
    <location>
        <begin position="1"/>
        <end position="3"/>
    </location>
</feature>
<feature type="splice variant" id="VSP_058766" description="In isoform G." evidence="14">
    <original>GKQVVALEREPSPCSIPKIQVYRPVECENPVVTKHKPIELKDIVGYSESLRDGDTAPAGGSPGRQQGYSANITDHASLTIWNNRLANIAGDRSGANQHLQQSGPPPPPIPPNFTRMPGFFQPLPLIAYETTIEILIVKARPPSPPPPPPPTIKRVLVHTESLEQKTQNFFEGIYDAASSDTSLRNAKQKIRSIKSTVLKSKDSTNYAQDTVQKAKARDFLHIFTPPVKKRPIYEIVEEPVNIFELEGDYTESIADDFREPSADFEARGQSVGGMDDYYSGYSRASTRRYET</original>
    <variation>A</variation>
    <location>
        <begin position="636"/>
        <end position="926"/>
    </location>
</feature>
<feature type="splice variant" id="VSP_058767" description="In isoform D, isoform E and isoform G." evidence="14">
    <location>
        <begin position="1789"/>
        <end position="1813"/>
    </location>
</feature>
<feature type="sequence conflict" description="In Ref. 3; ABD83643." evidence="14" ref="3">
    <original>N</original>
    <variation>S</variation>
    <location>
        <position position="145"/>
    </location>
</feature>
<feature type="strand" evidence="20">
    <location>
        <begin position="3186"/>
        <end position="3194"/>
    </location>
</feature>
<feature type="strand" evidence="20">
    <location>
        <begin position="3196"/>
        <end position="3205"/>
    </location>
</feature>
<feature type="turn" evidence="20">
    <location>
        <begin position="3206"/>
        <end position="3208"/>
    </location>
</feature>
<feature type="strand" evidence="20">
    <location>
        <begin position="3211"/>
        <end position="3217"/>
    </location>
</feature>
<feature type="helix" evidence="20">
    <location>
        <begin position="3221"/>
        <end position="3223"/>
    </location>
</feature>
<feature type="helix" evidence="20">
    <location>
        <begin position="3224"/>
        <end position="3234"/>
    </location>
</feature>
<feature type="strand" evidence="20">
    <location>
        <begin position="3245"/>
        <end position="3250"/>
    </location>
</feature>
<feature type="strand" evidence="20">
    <location>
        <begin position="3255"/>
        <end position="3259"/>
    </location>
</feature>
<feature type="helix" evidence="20">
    <location>
        <begin position="3267"/>
        <end position="3270"/>
    </location>
</feature>
<feature type="helix" evidence="20">
    <location>
        <begin position="3272"/>
        <end position="3274"/>
    </location>
</feature>
<feature type="strand" evidence="20">
    <location>
        <begin position="3275"/>
        <end position="3278"/>
    </location>
</feature>
<feature type="helix" evidence="20">
    <location>
        <begin position="3280"/>
        <end position="3299"/>
    </location>
</feature>
<feature type="helix" evidence="20">
    <location>
        <begin position="3309"/>
        <end position="3311"/>
    </location>
</feature>
<feature type="strand" evidence="20">
    <location>
        <begin position="3312"/>
        <end position="3316"/>
    </location>
</feature>
<feature type="strand" evidence="20">
    <location>
        <begin position="3322"/>
        <end position="3324"/>
    </location>
</feature>
<feature type="helix" evidence="20">
    <location>
        <begin position="3346"/>
        <end position="3348"/>
    </location>
</feature>
<feature type="helix" evidence="20">
    <location>
        <begin position="3351"/>
        <end position="3354"/>
    </location>
</feature>
<feature type="helix" evidence="20">
    <location>
        <begin position="3362"/>
        <end position="3377"/>
    </location>
</feature>
<feature type="helix" evidence="20">
    <location>
        <begin position="3387"/>
        <end position="3396"/>
    </location>
</feature>
<feature type="helix" evidence="20">
    <location>
        <begin position="3404"/>
        <end position="3408"/>
    </location>
</feature>
<feature type="helix" evidence="20">
    <location>
        <begin position="3411"/>
        <end position="3418"/>
    </location>
</feature>
<feature type="helix" evidence="20">
    <location>
        <begin position="3425"/>
        <end position="3427"/>
    </location>
</feature>
<feature type="helix" evidence="20">
    <location>
        <begin position="3431"/>
        <end position="3435"/>
    </location>
</feature>
<feature type="helix" evidence="20">
    <location>
        <begin position="3438"/>
        <end position="3444"/>
    </location>
</feature>
<feature type="strand" evidence="20">
    <location>
        <begin position="3454"/>
        <end position="3456"/>
    </location>
</feature>
<feature type="helix" evidence="20">
    <location>
        <begin position="3457"/>
        <end position="3471"/>
    </location>
</feature>
<dbReference type="EMBL" id="AE013599">
    <property type="protein sequence ID" value="AAX52680.3"/>
    <property type="molecule type" value="Genomic_DNA"/>
</dbReference>
<dbReference type="EMBL" id="AE013599">
    <property type="protein sequence ID" value="ABV53900.1"/>
    <property type="molecule type" value="Genomic_DNA"/>
</dbReference>
<dbReference type="EMBL" id="AE013599">
    <property type="protein sequence ID" value="AHN56598.1"/>
    <property type="molecule type" value="Genomic_DNA"/>
</dbReference>
<dbReference type="EMBL" id="AE013599">
    <property type="protein sequence ID" value="AHN56599.1"/>
    <property type="molecule type" value="Genomic_DNA"/>
</dbReference>
<dbReference type="EMBL" id="AE013599">
    <property type="protein sequence ID" value="AHN56600.1"/>
    <property type="molecule type" value="Genomic_DNA"/>
</dbReference>
<dbReference type="EMBL" id="AE013599">
    <property type="protein sequence ID" value="AHN56601.1"/>
    <property type="molecule type" value="Genomic_DNA"/>
</dbReference>
<dbReference type="EMBL" id="DQ431841">
    <property type="protein sequence ID" value="ABD83643.1"/>
    <property type="molecule type" value="mRNA"/>
</dbReference>
<dbReference type="RefSeq" id="NP_001014545.3">
    <molecule id="A8DYP0-2"/>
    <property type="nucleotide sequence ID" value="NM_001014545.3"/>
</dbReference>
<dbReference type="RefSeq" id="NP_001097440.1">
    <molecule id="A8DYP0-1"/>
    <property type="nucleotide sequence ID" value="NM_001103970.2"/>
</dbReference>
<dbReference type="RefSeq" id="NP_001286803.1">
    <molecule id="A8DYP0-3"/>
    <property type="nucleotide sequence ID" value="NM_001299874.1"/>
</dbReference>
<dbReference type="RefSeq" id="NP_001286804.1">
    <molecule id="A8DYP0-4"/>
    <property type="nucleotide sequence ID" value="NM_001299875.1"/>
</dbReference>
<dbReference type="RefSeq" id="NP_001286805.1">
    <molecule id="A8DYP0-5"/>
    <property type="nucleotide sequence ID" value="NM_001299876.1"/>
</dbReference>
<dbReference type="RefSeq" id="NP_001286806.1">
    <molecule id="A8DYP0-6"/>
    <property type="nucleotide sequence ID" value="NM_001299877.1"/>
</dbReference>
<dbReference type="PDB" id="8AK2">
    <property type="method" value="X-ray"/>
    <property type="resolution" value="1.75 A"/>
    <property type="chains" value="A=3186-3480"/>
</dbReference>
<dbReference type="PDB" id="8AK3">
    <property type="method" value="X-ray"/>
    <property type="resolution" value="1.90 A"/>
    <property type="chains" value="A=3186-3480"/>
</dbReference>
<dbReference type="PDBsum" id="8AK2"/>
<dbReference type="PDBsum" id="8AK3"/>
<dbReference type="SMR" id="A8DYP0"/>
<dbReference type="FunCoup" id="A8DYP0">
    <property type="interactions" value="64"/>
</dbReference>
<dbReference type="IntAct" id="A8DYP0">
    <property type="interactions" value="13"/>
</dbReference>
<dbReference type="STRING" id="7227.FBpp0112375"/>
<dbReference type="GlyGen" id="A8DYP0">
    <property type="glycosylation" value="1 site"/>
</dbReference>
<dbReference type="PaxDb" id="7227-FBpp0112375"/>
<dbReference type="EnsemblMetazoa" id="FBtr0113464">
    <molecule id="A8DYP0-1"/>
    <property type="protein sequence ID" value="FBpp0112375"/>
    <property type="gene ID" value="FBgn0053519"/>
</dbReference>
<dbReference type="EnsemblMetazoa" id="FBtr0343283">
    <molecule id="A8DYP0-2"/>
    <property type="protein sequence ID" value="FBpp0309948"/>
    <property type="gene ID" value="FBgn0053519"/>
</dbReference>
<dbReference type="EnsemblMetazoa" id="FBtr0343284">
    <molecule id="A8DYP0-3"/>
    <property type="protein sequence ID" value="FBpp0309949"/>
    <property type="gene ID" value="FBgn0053519"/>
</dbReference>
<dbReference type="EnsemblMetazoa" id="FBtr0343285">
    <molecule id="A8DYP0-4"/>
    <property type="protein sequence ID" value="FBpp0309950"/>
    <property type="gene ID" value="FBgn0053519"/>
</dbReference>
<dbReference type="EnsemblMetazoa" id="FBtr0343286">
    <molecule id="A8DYP0-5"/>
    <property type="protein sequence ID" value="FBpp0309951"/>
    <property type="gene ID" value="FBgn0053519"/>
</dbReference>
<dbReference type="EnsemblMetazoa" id="FBtr0343287">
    <molecule id="A8DYP0-6"/>
    <property type="protein sequence ID" value="FBpp0309952"/>
    <property type="gene ID" value="FBgn0053519"/>
</dbReference>
<dbReference type="GeneID" id="3346201"/>
<dbReference type="KEGG" id="dme:Dmel_CG33519"/>
<dbReference type="UCSC" id="CG33519-RB">
    <property type="organism name" value="d. melanogaster"/>
</dbReference>
<dbReference type="UCSC" id="CG33519-RC">
    <molecule id="A8DYP0-1"/>
    <property type="organism name" value="d. melanogaster"/>
</dbReference>
<dbReference type="AGR" id="FB:FBgn0053519"/>
<dbReference type="CTD" id="3346201"/>
<dbReference type="FlyBase" id="FBgn0053519">
    <property type="gene designation" value="Obsc"/>
</dbReference>
<dbReference type="VEuPathDB" id="VectorBase:FBgn0053519"/>
<dbReference type="eggNOG" id="KOG0032">
    <property type="taxonomic scope" value="Eukaryota"/>
</dbReference>
<dbReference type="eggNOG" id="KOG4240">
    <property type="taxonomic scope" value="Eukaryota"/>
</dbReference>
<dbReference type="eggNOG" id="KOG4475">
    <property type="taxonomic scope" value="Eukaryota"/>
</dbReference>
<dbReference type="InParanoid" id="A8DYP0"/>
<dbReference type="OMA" id="WLPMSIL"/>
<dbReference type="OrthoDB" id="2570713at2759"/>
<dbReference type="PhylomeDB" id="A8DYP0"/>
<dbReference type="SignaLink" id="A8DYP0"/>
<dbReference type="BioGRID-ORCS" id="3346201">
    <property type="hits" value="0 hits in 3 CRISPR screens"/>
</dbReference>
<dbReference type="ChiTaRS" id="Unc-89">
    <property type="organism name" value="fly"/>
</dbReference>
<dbReference type="GenomeRNAi" id="3346201"/>
<dbReference type="PRO" id="PR:A8DYP0"/>
<dbReference type="Proteomes" id="UP000000803">
    <property type="component" value="Chromosome 2R"/>
</dbReference>
<dbReference type="Bgee" id="FBgn0053519">
    <property type="expression patterns" value="Expressed in indirect flight muscle cell (Drosophila) in body wall and 67 other cell types or tissues"/>
</dbReference>
<dbReference type="ExpressionAtlas" id="A8DYP0">
    <property type="expression patterns" value="baseline and differential"/>
</dbReference>
<dbReference type="GO" id="GO:0031430">
    <property type="term" value="C:M band"/>
    <property type="evidence" value="ECO:0000314"/>
    <property type="project" value="UniProtKB"/>
</dbReference>
<dbReference type="GO" id="GO:0005524">
    <property type="term" value="F:ATP binding"/>
    <property type="evidence" value="ECO:0000314"/>
    <property type="project" value="FlyBase"/>
</dbReference>
<dbReference type="GO" id="GO:0005085">
    <property type="term" value="F:guanyl-nucleotide exchange factor activity"/>
    <property type="evidence" value="ECO:0007669"/>
    <property type="project" value="InterPro"/>
</dbReference>
<dbReference type="GO" id="GO:0019901">
    <property type="term" value="F:protein kinase binding"/>
    <property type="evidence" value="ECO:0000353"/>
    <property type="project" value="UniProtKB"/>
</dbReference>
<dbReference type="GO" id="GO:0005523">
    <property type="term" value="F:tropomyosin binding"/>
    <property type="evidence" value="ECO:0000353"/>
    <property type="project" value="UniProtKB"/>
</dbReference>
<dbReference type="GO" id="GO:0007527">
    <property type="term" value="P:adult somatic muscle development"/>
    <property type="evidence" value="ECO:0000315"/>
    <property type="project" value="FlyBase"/>
</dbReference>
<dbReference type="GO" id="GO:0036309">
    <property type="term" value="P:protein localization to M-band"/>
    <property type="evidence" value="ECO:0000315"/>
    <property type="project" value="UniProtKB"/>
</dbReference>
<dbReference type="GO" id="GO:0045214">
    <property type="term" value="P:sarcomere organization"/>
    <property type="evidence" value="ECO:0000315"/>
    <property type="project" value="UniProtKB"/>
</dbReference>
<dbReference type="CDD" id="cd00063">
    <property type="entry name" value="FN3"/>
    <property type="match status" value="2"/>
</dbReference>
<dbReference type="CDD" id="cd00096">
    <property type="entry name" value="Ig"/>
    <property type="match status" value="1"/>
</dbReference>
<dbReference type="CDD" id="cd13325">
    <property type="entry name" value="PH_unc89"/>
    <property type="match status" value="1"/>
</dbReference>
<dbReference type="CDD" id="cd14109">
    <property type="entry name" value="PK_Unc-89_rpt1"/>
    <property type="match status" value="1"/>
</dbReference>
<dbReference type="CDD" id="cd00160">
    <property type="entry name" value="RhoGEF"/>
    <property type="match status" value="1"/>
</dbReference>
<dbReference type="CDD" id="cd14112">
    <property type="entry name" value="STKc_Unc-89_rpt2"/>
    <property type="match status" value="1"/>
</dbReference>
<dbReference type="FunFam" id="2.60.40.10:FF:000345">
    <property type="entry name" value="Muscle M-line assembly protein unc-89"/>
    <property type="match status" value="3"/>
</dbReference>
<dbReference type="FunFam" id="2.60.40.10:FF:000519">
    <property type="entry name" value="Muscle M-line assembly protein unc-89"/>
    <property type="match status" value="1"/>
</dbReference>
<dbReference type="FunFam" id="2.60.40.10:FF:000796">
    <property type="entry name" value="Muscle M-line assembly protein unc-89"/>
    <property type="match status" value="1"/>
</dbReference>
<dbReference type="FunFam" id="2.60.40.10:FF:000802">
    <property type="entry name" value="Muscle M-line assembly protein unc-89"/>
    <property type="match status" value="1"/>
</dbReference>
<dbReference type="FunFam" id="2.60.40.10:FF:000873">
    <property type="entry name" value="Muscle M-line assembly protein unc-89"/>
    <property type="match status" value="1"/>
</dbReference>
<dbReference type="FunFam" id="2.60.40.10:FF:000940">
    <property type="entry name" value="Muscle M-line assembly protein unc-89"/>
    <property type="match status" value="1"/>
</dbReference>
<dbReference type="FunFam" id="2.60.40.10:FF:001036">
    <property type="entry name" value="Muscle M-line assembly protein unc-89"/>
    <property type="match status" value="1"/>
</dbReference>
<dbReference type="FunFam" id="1.10.510.10:FF:000681">
    <property type="entry name" value="Muscle M-line assembly protein unc-89-like Protein"/>
    <property type="match status" value="1"/>
</dbReference>
<dbReference type="FunFam" id="1.20.900.10:FF:000033">
    <property type="entry name" value="Muscle M-line assembly protein unc-89-like Protein"/>
    <property type="match status" value="1"/>
</dbReference>
<dbReference type="FunFam" id="2.60.40.10:FF:000147">
    <property type="entry name" value="Myosin light chain kinase"/>
    <property type="match status" value="1"/>
</dbReference>
<dbReference type="FunFam" id="2.60.40.10:FF:000145">
    <property type="entry name" value="Myosin light chain kinase, smooth muscle"/>
    <property type="match status" value="2"/>
</dbReference>
<dbReference type="FunFam" id="2.60.40.10:FF:000107">
    <property type="entry name" value="Myosin, light chain kinase a"/>
    <property type="match status" value="2"/>
</dbReference>
<dbReference type="FunFam" id="2.60.40.10:FF:001418">
    <property type="entry name" value="Uncharacterized protein, isoform B"/>
    <property type="match status" value="1"/>
</dbReference>
<dbReference type="FunFam" id="2.60.40.10:FF:001669">
    <property type="entry name" value="Uncharacterized protein, isoform B"/>
    <property type="match status" value="1"/>
</dbReference>
<dbReference type="FunFam" id="2.60.40.10:FF:000919">
    <property type="entry name" value="Uncharacterized protein, isoform C"/>
    <property type="match status" value="1"/>
</dbReference>
<dbReference type="FunFam" id="2.60.40.10:FF:001381">
    <property type="entry name" value="Uncharacterized protein, isoform C"/>
    <property type="match status" value="1"/>
</dbReference>
<dbReference type="FunFam" id="1.10.510.10:FF:000573">
    <property type="entry name" value="Uncharacterized protein, isoform D"/>
    <property type="match status" value="1"/>
</dbReference>
<dbReference type="FunFam" id="2.30.29.30:FF:000414">
    <property type="entry name" value="Uncharacterized protein, isoform D"/>
    <property type="match status" value="1"/>
</dbReference>
<dbReference type="FunFam" id="2.60.40.10:FF:001590">
    <property type="entry name" value="Uncharacterized protein, isoform D"/>
    <property type="match status" value="1"/>
</dbReference>
<dbReference type="Gene3D" id="1.20.900.10">
    <property type="entry name" value="Dbl homology (DH) domain"/>
    <property type="match status" value="1"/>
</dbReference>
<dbReference type="Gene3D" id="2.60.40.10">
    <property type="entry name" value="Immunoglobulins"/>
    <property type="match status" value="23"/>
</dbReference>
<dbReference type="Gene3D" id="3.30.200.20">
    <property type="entry name" value="Phosphorylase Kinase, domain 1"/>
    <property type="match status" value="1"/>
</dbReference>
<dbReference type="Gene3D" id="2.30.29.30">
    <property type="entry name" value="Pleckstrin-homology domain (PH domain)/Phosphotyrosine-binding domain (PTB)"/>
    <property type="match status" value="1"/>
</dbReference>
<dbReference type="Gene3D" id="2.30.30.40">
    <property type="entry name" value="SH3 Domains"/>
    <property type="match status" value="1"/>
</dbReference>
<dbReference type="Gene3D" id="1.10.510.10">
    <property type="entry name" value="Transferase(Phosphotransferase) domain 1"/>
    <property type="match status" value="2"/>
</dbReference>
<dbReference type="InterPro" id="IPR035899">
    <property type="entry name" value="DBL_dom_sf"/>
</dbReference>
<dbReference type="InterPro" id="IPR000219">
    <property type="entry name" value="DH_dom"/>
</dbReference>
<dbReference type="InterPro" id="IPR003961">
    <property type="entry name" value="FN3_dom"/>
</dbReference>
<dbReference type="InterPro" id="IPR036116">
    <property type="entry name" value="FN3_sf"/>
</dbReference>
<dbReference type="InterPro" id="IPR007110">
    <property type="entry name" value="Ig-like_dom"/>
</dbReference>
<dbReference type="InterPro" id="IPR036179">
    <property type="entry name" value="Ig-like_dom_sf"/>
</dbReference>
<dbReference type="InterPro" id="IPR013783">
    <property type="entry name" value="Ig-like_fold"/>
</dbReference>
<dbReference type="InterPro" id="IPR013098">
    <property type="entry name" value="Ig_I-set"/>
</dbReference>
<dbReference type="InterPro" id="IPR003599">
    <property type="entry name" value="Ig_sub"/>
</dbReference>
<dbReference type="InterPro" id="IPR003598">
    <property type="entry name" value="Ig_sub2"/>
</dbReference>
<dbReference type="InterPro" id="IPR011009">
    <property type="entry name" value="Kinase-like_dom_sf"/>
</dbReference>
<dbReference type="InterPro" id="IPR011993">
    <property type="entry name" value="PH-like_dom_sf"/>
</dbReference>
<dbReference type="InterPro" id="IPR000719">
    <property type="entry name" value="Prot_kinase_dom"/>
</dbReference>
<dbReference type="InterPro" id="IPR036028">
    <property type="entry name" value="SH3-like_dom_sf"/>
</dbReference>
<dbReference type="InterPro" id="IPR001452">
    <property type="entry name" value="SH3_domain"/>
</dbReference>
<dbReference type="InterPro" id="IPR055251">
    <property type="entry name" value="SOS1_NGEF_PH"/>
</dbReference>
<dbReference type="PANTHER" id="PTHR47633:SF11">
    <property type="entry name" value="IG-LIKE DOMAIN-CONTAINING PROTEIN"/>
    <property type="match status" value="1"/>
</dbReference>
<dbReference type="PANTHER" id="PTHR47633">
    <property type="entry name" value="IMMUNOGLOBULIN"/>
    <property type="match status" value="1"/>
</dbReference>
<dbReference type="Pfam" id="PF00041">
    <property type="entry name" value="fn3"/>
    <property type="match status" value="2"/>
</dbReference>
<dbReference type="Pfam" id="PF07679">
    <property type="entry name" value="I-set"/>
    <property type="match status" value="20"/>
</dbReference>
<dbReference type="Pfam" id="PF13927">
    <property type="entry name" value="Ig_3"/>
    <property type="match status" value="1"/>
</dbReference>
<dbReference type="Pfam" id="PF00069">
    <property type="entry name" value="Pkinase"/>
    <property type="match status" value="2"/>
</dbReference>
<dbReference type="Pfam" id="PF00621">
    <property type="entry name" value="RhoGEF"/>
    <property type="match status" value="1"/>
</dbReference>
<dbReference type="Pfam" id="PF22697">
    <property type="entry name" value="SOS1_NGEF_PH"/>
    <property type="match status" value="1"/>
</dbReference>
<dbReference type="SMART" id="SM00060">
    <property type="entry name" value="FN3"/>
    <property type="match status" value="2"/>
</dbReference>
<dbReference type="SMART" id="SM00409">
    <property type="entry name" value="IG"/>
    <property type="match status" value="21"/>
</dbReference>
<dbReference type="SMART" id="SM00408">
    <property type="entry name" value="IGc2"/>
    <property type="match status" value="18"/>
</dbReference>
<dbReference type="SMART" id="SM00325">
    <property type="entry name" value="RhoGEF"/>
    <property type="match status" value="1"/>
</dbReference>
<dbReference type="SUPFAM" id="SSF48065">
    <property type="entry name" value="DBL homology domain (DH-domain)"/>
    <property type="match status" value="1"/>
</dbReference>
<dbReference type="SUPFAM" id="SSF49265">
    <property type="entry name" value="Fibronectin type III"/>
    <property type="match status" value="2"/>
</dbReference>
<dbReference type="SUPFAM" id="SSF48726">
    <property type="entry name" value="Immunoglobulin"/>
    <property type="match status" value="21"/>
</dbReference>
<dbReference type="SUPFAM" id="SSF50729">
    <property type="entry name" value="PH domain-like"/>
    <property type="match status" value="1"/>
</dbReference>
<dbReference type="SUPFAM" id="SSF56112">
    <property type="entry name" value="Protein kinase-like (PK-like)"/>
    <property type="match status" value="2"/>
</dbReference>
<dbReference type="SUPFAM" id="SSF50044">
    <property type="entry name" value="SH3-domain"/>
    <property type="match status" value="1"/>
</dbReference>
<dbReference type="PROSITE" id="PS50010">
    <property type="entry name" value="DH_2"/>
    <property type="match status" value="1"/>
</dbReference>
<dbReference type="PROSITE" id="PS50853">
    <property type="entry name" value="FN3"/>
    <property type="match status" value="2"/>
</dbReference>
<dbReference type="PROSITE" id="PS50835">
    <property type="entry name" value="IG_LIKE"/>
    <property type="match status" value="15"/>
</dbReference>
<dbReference type="PROSITE" id="PS50011">
    <property type="entry name" value="PROTEIN_KINASE_DOM"/>
    <property type="match status" value="2"/>
</dbReference>
<dbReference type="PROSITE" id="PS50002">
    <property type="entry name" value="SH3"/>
    <property type="match status" value="1"/>
</dbReference>
<evidence type="ECO:0000250" key="1">
    <source>
        <dbReference type="UniProtKB" id="O01761"/>
    </source>
</evidence>
<evidence type="ECO:0000255" key="2"/>
<evidence type="ECO:0000255" key="3">
    <source>
        <dbReference type="PROSITE-ProRule" id="PRU00062"/>
    </source>
</evidence>
<evidence type="ECO:0000255" key="4">
    <source>
        <dbReference type="PROSITE-ProRule" id="PRU00114"/>
    </source>
</evidence>
<evidence type="ECO:0000255" key="5">
    <source>
        <dbReference type="PROSITE-ProRule" id="PRU00159"/>
    </source>
</evidence>
<evidence type="ECO:0000255" key="6">
    <source>
        <dbReference type="PROSITE-ProRule" id="PRU00192"/>
    </source>
</evidence>
<evidence type="ECO:0000255" key="7">
    <source>
        <dbReference type="PROSITE-ProRule" id="PRU00316"/>
    </source>
</evidence>
<evidence type="ECO:0000256" key="8">
    <source>
        <dbReference type="SAM" id="MobiDB-lite"/>
    </source>
</evidence>
<evidence type="ECO:0000269" key="9">
    <source>
    </source>
</evidence>
<evidence type="ECO:0000269" key="10">
    <source>
    </source>
</evidence>
<evidence type="ECO:0000269" key="11">
    <source>
    </source>
</evidence>
<evidence type="ECO:0000269" key="12">
    <source>
    </source>
</evidence>
<evidence type="ECO:0000303" key="13">
    <source>
    </source>
</evidence>
<evidence type="ECO:0000305" key="14"/>
<evidence type="ECO:0000312" key="15">
    <source>
        <dbReference type="EMBL" id="ABD83643.1"/>
    </source>
</evidence>
<evidence type="ECO:0000312" key="16">
    <source>
        <dbReference type="FlyBase" id="FBgn0053519"/>
    </source>
</evidence>
<evidence type="ECO:0000312" key="17">
    <source>
        <dbReference type="Proteomes" id="UP000000803"/>
    </source>
</evidence>
<evidence type="ECO:0007744" key="18">
    <source>
        <dbReference type="PDB" id="8AK2"/>
    </source>
</evidence>
<evidence type="ECO:0007744" key="19">
    <source>
        <dbReference type="PDB" id="8AK3"/>
    </source>
</evidence>
<evidence type="ECO:0007829" key="20">
    <source>
        <dbReference type="PDB" id="8AK2"/>
    </source>
</evidence>
<protein>
    <recommendedName>
        <fullName evidence="16">Protein Obscurin</fullName>
    </recommendedName>
    <alternativeName>
        <fullName evidence="14">Inactive serine/threonine-protein kinase obscurin</fullName>
    </alternativeName>
    <alternativeName>
        <fullName evidence="1">Muscle M-line assembly protein Unc-89</fullName>
    </alternativeName>
</protein>
<reference evidence="17" key="1">
    <citation type="journal article" date="2000" name="Science">
        <title>The genome sequence of Drosophila melanogaster.</title>
        <authorList>
            <person name="Adams M.D."/>
            <person name="Celniker S.E."/>
            <person name="Holt R.A."/>
            <person name="Evans C.A."/>
            <person name="Gocayne J.D."/>
            <person name="Amanatides P.G."/>
            <person name="Scherer S.E."/>
            <person name="Li P.W."/>
            <person name="Hoskins R.A."/>
            <person name="Galle R.F."/>
            <person name="George R.A."/>
            <person name="Lewis S.E."/>
            <person name="Richards S."/>
            <person name="Ashburner M."/>
            <person name="Henderson S.N."/>
            <person name="Sutton G.G."/>
            <person name="Wortman J.R."/>
            <person name="Yandell M.D."/>
            <person name="Zhang Q."/>
            <person name="Chen L.X."/>
            <person name="Brandon R.C."/>
            <person name="Rogers Y.-H.C."/>
            <person name="Blazej R.G."/>
            <person name="Champe M."/>
            <person name="Pfeiffer B.D."/>
            <person name="Wan K.H."/>
            <person name="Doyle C."/>
            <person name="Baxter E.G."/>
            <person name="Helt G."/>
            <person name="Nelson C.R."/>
            <person name="Miklos G.L.G."/>
            <person name="Abril J.F."/>
            <person name="Agbayani A."/>
            <person name="An H.-J."/>
            <person name="Andrews-Pfannkoch C."/>
            <person name="Baldwin D."/>
            <person name="Ballew R.M."/>
            <person name="Basu A."/>
            <person name="Baxendale J."/>
            <person name="Bayraktaroglu L."/>
            <person name="Beasley E.M."/>
            <person name="Beeson K.Y."/>
            <person name="Benos P.V."/>
            <person name="Berman B.P."/>
            <person name="Bhandari D."/>
            <person name="Bolshakov S."/>
            <person name="Borkova D."/>
            <person name="Botchan M.R."/>
            <person name="Bouck J."/>
            <person name="Brokstein P."/>
            <person name="Brottier P."/>
            <person name="Burtis K.C."/>
            <person name="Busam D.A."/>
            <person name="Butler H."/>
            <person name="Cadieu E."/>
            <person name="Center A."/>
            <person name="Chandra I."/>
            <person name="Cherry J.M."/>
            <person name="Cawley S."/>
            <person name="Dahlke C."/>
            <person name="Davenport L.B."/>
            <person name="Davies P."/>
            <person name="de Pablos B."/>
            <person name="Delcher A."/>
            <person name="Deng Z."/>
            <person name="Mays A.D."/>
            <person name="Dew I."/>
            <person name="Dietz S.M."/>
            <person name="Dodson K."/>
            <person name="Doup L.E."/>
            <person name="Downes M."/>
            <person name="Dugan-Rocha S."/>
            <person name="Dunkov B.C."/>
            <person name="Dunn P."/>
            <person name="Durbin K.J."/>
            <person name="Evangelista C.C."/>
            <person name="Ferraz C."/>
            <person name="Ferriera S."/>
            <person name="Fleischmann W."/>
            <person name="Fosler C."/>
            <person name="Gabrielian A.E."/>
            <person name="Garg N.S."/>
            <person name="Gelbart W.M."/>
            <person name="Glasser K."/>
            <person name="Glodek A."/>
            <person name="Gong F."/>
            <person name="Gorrell J.H."/>
            <person name="Gu Z."/>
            <person name="Guan P."/>
            <person name="Harris M."/>
            <person name="Harris N.L."/>
            <person name="Harvey D.A."/>
            <person name="Heiman T.J."/>
            <person name="Hernandez J.R."/>
            <person name="Houck J."/>
            <person name="Hostin D."/>
            <person name="Houston K.A."/>
            <person name="Howland T.J."/>
            <person name="Wei M.-H."/>
            <person name="Ibegwam C."/>
            <person name="Jalali M."/>
            <person name="Kalush F."/>
            <person name="Karpen G.H."/>
            <person name="Ke Z."/>
            <person name="Kennison J.A."/>
            <person name="Ketchum K.A."/>
            <person name="Kimmel B.E."/>
            <person name="Kodira C.D."/>
            <person name="Kraft C.L."/>
            <person name="Kravitz S."/>
            <person name="Kulp D."/>
            <person name="Lai Z."/>
            <person name="Lasko P."/>
            <person name="Lei Y."/>
            <person name="Levitsky A.A."/>
            <person name="Li J.H."/>
            <person name="Li Z."/>
            <person name="Liang Y."/>
            <person name="Lin X."/>
            <person name="Liu X."/>
            <person name="Mattei B."/>
            <person name="McIntosh T.C."/>
            <person name="McLeod M.P."/>
            <person name="McPherson D."/>
            <person name="Merkulov G."/>
            <person name="Milshina N.V."/>
            <person name="Mobarry C."/>
            <person name="Morris J."/>
            <person name="Moshrefi A."/>
            <person name="Mount S.M."/>
            <person name="Moy M."/>
            <person name="Murphy B."/>
            <person name="Murphy L."/>
            <person name="Muzny D.M."/>
            <person name="Nelson D.L."/>
            <person name="Nelson D.R."/>
            <person name="Nelson K.A."/>
            <person name="Nixon K."/>
            <person name="Nusskern D.R."/>
            <person name="Pacleb J.M."/>
            <person name="Palazzolo M."/>
            <person name="Pittman G.S."/>
            <person name="Pan S."/>
            <person name="Pollard J."/>
            <person name="Puri V."/>
            <person name="Reese M.G."/>
            <person name="Reinert K."/>
            <person name="Remington K."/>
            <person name="Saunders R.D.C."/>
            <person name="Scheeler F."/>
            <person name="Shen H."/>
            <person name="Shue B.C."/>
            <person name="Siden-Kiamos I."/>
            <person name="Simpson M."/>
            <person name="Skupski M.P."/>
            <person name="Smith T.J."/>
            <person name="Spier E."/>
            <person name="Spradling A.C."/>
            <person name="Stapleton M."/>
            <person name="Strong R."/>
            <person name="Sun E."/>
            <person name="Svirskas R."/>
            <person name="Tector C."/>
            <person name="Turner R."/>
            <person name="Venter E."/>
            <person name="Wang A.H."/>
            <person name="Wang X."/>
            <person name="Wang Z.-Y."/>
            <person name="Wassarman D.A."/>
            <person name="Weinstock G.M."/>
            <person name="Weissenbach J."/>
            <person name="Williams S.M."/>
            <person name="Woodage T."/>
            <person name="Worley K.C."/>
            <person name="Wu D."/>
            <person name="Yang S."/>
            <person name="Yao Q.A."/>
            <person name="Ye J."/>
            <person name="Yeh R.-F."/>
            <person name="Zaveri J.S."/>
            <person name="Zhan M."/>
            <person name="Zhang G."/>
            <person name="Zhao Q."/>
            <person name="Zheng L."/>
            <person name="Zheng X.H."/>
            <person name="Zhong F.N."/>
            <person name="Zhong W."/>
            <person name="Zhou X."/>
            <person name="Zhu S.C."/>
            <person name="Zhu X."/>
            <person name="Smith H.O."/>
            <person name="Gibbs R.A."/>
            <person name="Myers E.W."/>
            <person name="Rubin G.M."/>
            <person name="Venter J.C."/>
        </authorList>
    </citation>
    <scope>NUCLEOTIDE SEQUENCE [LARGE SCALE GENOMIC DNA]</scope>
    <source>
        <strain evidence="17">Berkeley</strain>
    </source>
</reference>
<reference evidence="17" key="2">
    <citation type="journal article" date="2002" name="Genome Biol.">
        <title>Annotation of the Drosophila melanogaster euchromatic genome: a systematic review.</title>
        <authorList>
            <person name="Misra S."/>
            <person name="Crosby M.A."/>
            <person name="Mungall C.J."/>
            <person name="Matthews B.B."/>
            <person name="Campbell K.S."/>
            <person name="Hradecky P."/>
            <person name="Huang Y."/>
            <person name="Kaminker J.S."/>
            <person name="Millburn G.H."/>
            <person name="Prochnik S.E."/>
            <person name="Smith C.D."/>
            <person name="Tupy J.L."/>
            <person name="Whitfield E.J."/>
            <person name="Bayraktaroglu L."/>
            <person name="Berman B.P."/>
            <person name="Bettencourt B.R."/>
            <person name="Celniker S.E."/>
            <person name="de Grey A.D.N.J."/>
            <person name="Drysdale R.A."/>
            <person name="Harris N.L."/>
            <person name="Richter J."/>
            <person name="Russo S."/>
            <person name="Schroeder A.J."/>
            <person name="Shu S.Q."/>
            <person name="Stapleton M."/>
            <person name="Yamada C."/>
            <person name="Ashburner M."/>
            <person name="Gelbart W.M."/>
            <person name="Rubin G.M."/>
            <person name="Lewis S.E."/>
        </authorList>
    </citation>
    <scope>GENOME REANNOTATION</scope>
    <source>
        <strain evidence="17">Berkeley</strain>
    </source>
</reference>
<reference evidence="15" key="3">
    <citation type="journal article" date="2004" name="Dev. Genes Evol.">
        <title>Orthologous relationship of obscurin and Unc-89: phylogeny of a novel family of tandem myosin light chain kinases.</title>
        <authorList>
            <person name="Sutter S.B."/>
            <person name="Raeker M.O."/>
            <person name="Borisov A.B."/>
            <person name="Russell M.W."/>
        </authorList>
    </citation>
    <scope>NUCLEOTIDE SEQUENCE [MRNA] OF 85-452</scope>
</reference>
<reference evidence="14" key="4">
    <citation type="journal article" date="2008" name="Biophys. J.">
        <title>Aging enhances indirect flight muscle fiber performance yet decreases flight ability in Drosophila.</title>
        <authorList>
            <person name="Miller M.S."/>
            <person name="Lekkas P."/>
            <person name="Braddock J.M."/>
            <person name="Farman G.P."/>
            <person name="Ballif B.A."/>
            <person name="Irving T.C."/>
            <person name="Maughan D.W."/>
            <person name="Vigoreaux J.O."/>
        </authorList>
    </citation>
    <scope>INDUCTION</scope>
</reference>
<reference evidence="14" key="5">
    <citation type="journal article" date="2012" name="J. Cell Sci.">
        <title>The function of the M-line protein obscurin in controlling the symmetry of the sarcomere in the flight muscle of Drosophila.</title>
        <authorList>
            <person name="Katzemich A."/>
            <person name="Kreiskoether N."/>
            <person name="Alexandrovich A."/>
            <person name="Elliott C."/>
            <person name="Schoeck F."/>
            <person name="Leonard K."/>
            <person name="Sparrow J."/>
            <person name="Bullard B."/>
        </authorList>
    </citation>
    <scope>ALTERNATIVE SPLICING</scope>
    <scope>FUNCTION</scope>
    <scope>INTERACTION WITH MYOSIN</scope>
    <scope>SUBCELLULAR LOCATION</scope>
    <scope>TISSUE SPECIFICITY</scope>
    <scope>DEVELOPMENTAL STAGE</scope>
    <scope>DISRUPTION PHENOTYPE</scope>
</reference>
<reference evidence="14" key="6">
    <citation type="journal article" date="2015" name="J. Cell Sci.">
        <title>Binding partners of the kinase domains in Drosophila obscurin and their effect on the structure of the flight muscle.</title>
        <authorList>
            <person name="Katzemich A."/>
            <person name="West R.J."/>
            <person name="Fukuzawa A."/>
            <person name="Sweeney S.T."/>
            <person name="Gautel M."/>
            <person name="Sparrow J."/>
            <person name="Bullard B."/>
        </authorList>
    </citation>
    <scope>FUNCTION</scope>
    <scope>INTERACTION WITH BALL; MASK AND TM1</scope>
    <scope>SUBCELLULAR LOCATION</scope>
    <scope>TISSUE SPECIFICITY</scope>
    <scope>DISRUPTION PHENOTYPE</scope>
</reference>
<reference evidence="18 19" key="7">
    <citation type="journal article" date="2023" name="Open Biol.">
        <title>PK1 from Drosophila obscurin is an inactive pseudokinase with scaffolding properties.</title>
        <authorList>
            <person name="Zacharchenko T."/>
            <person name="Dorendorf T."/>
            <person name="Locker N."/>
            <person name="Van Dijk E."/>
            <person name="Katzemich A."/>
            <person name="Diederichs K."/>
            <person name="Bullard B."/>
            <person name="Mayans O."/>
        </authorList>
    </citation>
    <scope>X-RAY CRYSTALLOGRAPHY (1.75 ANGSTROMS) OF 3186-3480 IN COMPLEX WITH ADP</scope>
    <scope>FUNCTION</scope>
    <scope>LACK OF KINASE ACTIVITY</scope>
    <scope>DOMAIN</scope>
</reference>
<keyword id="KW-0002">3D-structure</keyword>
<keyword id="KW-0025">Alternative splicing</keyword>
<keyword id="KW-0067">ATP-binding</keyword>
<keyword id="KW-0175">Coiled coil</keyword>
<keyword id="KW-0963">Cytoplasm</keyword>
<keyword id="KW-0217">Developmental protein</keyword>
<keyword id="KW-1015">Disulfide bond</keyword>
<keyword id="KW-0393">Immunoglobulin domain</keyword>
<keyword id="KW-0514">Muscle protein</keyword>
<keyword id="KW-0547">Nucleotide-binding</keyword>
<keyword id="KW-1185">Reference proteome</keyword>
<keyword id="KW-0677">Repeat</keyword>
<keyword id="KW-0728">SH3 domain</keyword>